<comment type="function">
    <text evidence="1">Secreted subtilisin-like serine protease with keratinolytic activity that contributes to pathogenicity.</text>
</comment>
<comment type="subcellular location">
    <subcellularLocation>
        <location evidence="4">Secreted</location>
    </subcellularLocation>
</comment>
<comment type="similarity">
    <text evidence="5">Belongs to the peptidase S8 family.</text>
</comment>
<proteinExistence type="evidence at protein level"/>
<reference key="1">
    <citation type="journal article" date="2007" name="FEMS Microbiol. Lett.">
        <title>Closely related dermatophyte species produce different patterns of secreted proteins.</title>
        <authorList>
            <person name="Giddey K."/>
            <person name="Favre B."/>
            <person name="Quadroni M."/>
            <person name="Monod M."/>
        </authorList>
    </citation>
    <scope>NUCLEOTIDE SEQUENCE [GENOMIC DNA]</scope>
    <scope>IDENTIFICATION BY MASS SPECTROMETRY</scope>
    <scope>SUBCELLULAR LOCATION</scope>
    <source>
        <strain>LAU 209</strain>
    </source>
</reference>
<organism>
    <name type="scientific">Trichophyton violaceum</name>
    <dbReference type="NCBI Taxonomy" id="34388"/>
    <lineage>
        <taxon>Eukaryota</taxon>
        <taxon>Fungi</taxon>
        <taxon>Dikarya</taxon>
        <taxon>Ascomycota</taxon>
        <taxon>Pezizomycotina</taxon>
        <taxon>Eurotiomycetes</taxon>
        <taxon>Eurotiomycetidae</taxon>
        <taxon>Onygenales</taxon>
        <taxon>Arthrodermataceae</taxon>
        <taxon>Trichophyton</taxon>
    </lineage>
</organism>
<feature type="signal peptide" evidence="2">
    <location>
        <begin position="1"/>
        <end position="20"/>
    </location>
</feature>
<feature type="propeptide" id="PRO_0000380828" evidence="1">
    <location>
        <begin position="21"/>
        <end position="119"/>
    </location>
</feature>
<feature type="chain" id="PRO_0000380829" description="Subtilisin-like protease 7">
    <location>
        <begin position="120"/>
        <end position="400"/>
    </location>
</feature>
<feature type="domain" description="Inhibitor I9" evidence="2">
    <location>
        <begin position="36"/>
        <end position="118"/>
    </location>
</feature>
<feature type="domain" description="Peptidase S8" evidence="3">
    <location>
        <begin position="129"/>
        <end position="400"/>
    </location>
</feature>
<feature type="active site" description="Charge relay system" evidence="3">
    <location>
        <position position="161"/>
    </location>
</feature>
<feature type="active site" description="Charge relay system" evidence="3">
    <location>
        <position position="192"/>
    </location>
</feature>
<feature type="active site" description="Charge relay system" evidence="3">
    <location>
        <position position="346"/>
    </location>
</feature>
<feature type="glycosylation site" description="N-linked (GlcNAc...) asparagine" evidence="2">
    <location>
        <position position="252"/>
    </location>
</feature>
<feature type="glycosylation site" description="N-linked (GlcNAc...) asparagine" evidence="2">
    <location>
        <position position="396"/>
    </location>
</feature>
<sequence length="400" mass="41549">MGFITKAIPLALAAASVINGAEILETRAGVQTLADKYIVVMNDGISDKDFDSHRSWVNRNHRRRLIRRGAKAMGGMKHTYNFPTGLKGYSGHFDEQMINEISKRADVKYIERDARVQINAIEQQDNVPSWGLARVGSKEPGGTTYYYDSTAGEGSTAYVIDTGTDIQHEEFEGRATWGANFVDDMDMDCNGHGTHVSGTIGGKTFGVAKKSNVVAVKVLDCSGSGSNSGVIMGMEWATKDAQQKGADKAVANMSLGGAFSQASNDAAAAIAKGGVFLAVAAGNDNVDAADSSPASEPSICTIAASTEQDSKADFSNFGQVVDVYAPGDSITSAKPGGGSQVLSGTSMATPHVAGLGAYLIGLGKGGGPGLCDTIKQMAIDVIQNPGASTTSKLINNGSGM</sequence>
<dbReference type="EC" id="3.4.21.-"/>
<dbReference type="EMBL" id="DQ382275">
    <property type="protein sequence ID" value="ABD38561.1"/>
    <property type="molecule type" value="Genomic_DNA"/>
</dbReference>
<dbReference type="SMR" id="A1XIH6"/>
<dbReference type="GlyCosmos" id="A1XIH6">
    <property type="glycosylation" value="2 sites, No reported glycans"/>
</dbReference>
<dbReference type="GO" id="GO:0005576">
    <property type="term" value="C:extracellular region"/>
    <property type="evidence" value="ECO:0007669"/>
    <property type="project" value="UniProtKB-SubCell"/>
</dbReference>
<dbReference type="GO" id="GO:0004252">
    <property type="term" value="F:serine-type endopeptidase activity"/>
    <property type="evidence" value="ECO:0007669"/>
    <property type="project" value="InterPro"/>
</dbReference>
<dbReference type="GO" id="GO:0006508">
    <property type="term" value="P:proteolysis"/>
    <property type="evidence" value="ECO:0007669"/>
    <property type="project" value="UniProtKB-KW"/>
</dbReference>
<dbReference type="CDD" id="cd04077">
    <property type="entry name" value="Peptidases_S8_PCSK9_ProteinaseK_like"/>
    <property type="match status" value="1"/>
</dbReference>
<dbReference type="FunFam" id="3.40.50.200:FF:000014">
    <property type="entry name" value="Proteinase K"/>
    <property type="match status" value="1"/>
</dbReference>
<dbReference type="Gene3D" id="3.30.70.80">
    <property type="entry name" value="Peptidase S8 propeptide/proteinase inhibitor I9"/>
    <property type="match status" value="1"/>
</dbReference>
<dbReference type="Gene3D" id="3.40.50.200">
    <property type="entry name" value="Peptidase S8/S53 domain"/>
    <property type="match status" value="1"/>
</dbReference>
<dbReference type="InterPro" id="IPR034193">
    <property type="entry name" value="PCSK9_ProteinaseK-like"/>
</dbReference>
<dbReference type="InterPro" id="IPR000209">
    <property type="entry name" value="Peptidase_S8/S53_dom"/>
</dbReference>
<dbReference type="InterPro" id="IPR036852">
    <property type="entry name" value="Peptidase_S8/S53_dom_sf"/>
</dbReference>
<dbReference type="InterPro" id="IPR022398">
    <property type="entry name" value="Peptidase_S8_His-AS"/>
</dbReference>
<dbReference type="InterPro" id="IPR023828">
    <property type="entry name" value="Peptidase_S8_Ser-AS"/>
</dbReference>
<dbReference type="InterPro" id="IPR050131">
    <property type="entry name" value="Peptidase_S8_subtilisin-like"/>
</dbReference>
<dbReference type="InterPro" id="IPR015500">
    <property type="entry name" value="Peptidase_S8_subtilisin-rel"/>
</dbReference>
<dbReference type="InterPro" id="IPR010259">
    <property type="entry name" value="S8pro/Inhibitor_I9"/>
</dbReference>
<dbReference type="InterPro" id="IPR037045">
    <property type="entry name" value="S8pro/Inhibitor_I9_sf"/>
</dbReference>
<dbReference type="PANTHER" id="PTHR43806:SF11">
    <property type="entry name" value="CEREVISIN-RELATED"/>
    <property type="match status" value="1"/>
</dbReference>
<dbReference type="PANTHER" id="PTHR43806">
    <property type="entry name" value="PEPTIDASE S8"/>
    <property type="match status" value="1"/>
</dbReference>
<dbReference type="Pfam" id="PF05922">
    <property type="entry name" value="Inhibitor_I9"/>
    <property type="match status" value="1"/>
</dbReference>
<dbReference type="Pfam" id="PF00082">
    <property type="entry name" value="Peptidase_S8"/>
    <property type="match status" value="1"/>
</dbReference>
<dbReference type="PRINTS" id="PR00723">
    <property type="entry name" value="SUBTILISIN"/>
</dbReference>
<dbReference type="SUPFAM" id="SSF54897">
    <property type="entry name" value="Protease propeptides/inhibitors"/>
    <property type="match status" value="1"/>
</dbReference>
<dbReference type="SUPFAM" id="SSF52743">
    <property type="entry name" value="Subtilisin-like"/>
    <property type="match status" value="1"/>
</dbReference>
<dbReference type="PROSITE" id="PS51892">
    <property type="entry name" value="SUBTILASE"/>
    <property type="match status" value="1"/>
</dbReference>
<dbReference type="PROSITE" id="PS00137">
    <property type="entry name" value="SUBTILASE_HIS"/>
    <property type="match status" value="1"/>
</dbReference>
<dbReference type="PROSITE" id="PS00138">
    <property type="entry name" value="SUBTILASE_SER"/>
    <property type="match status" value="1"/>
</dbReference>
<name>SUB7_TRIVO</name>
<evidence type="ECO:0000250" key="1"/>
<evidence type="ECO:0000255" key="2"/>
<evidence type="ECO:0000255" key="3">
    <source>
        <dbReference type="PROSITE-ProRule" id="PRU01240"/>
    </source>
</evidence>
<evidence type="ECO:0000269" key="4">
    <source>
    </source>
</evidence>
<evidence type="ECO:0000305" key="5"/>
<accession>A1XIH6</accession>
<protein>
    <recommendedName>
        <fullName>Subtilisin-like protease 7</fullName>
        <ecNumber>3.4.21.-</ecNumber>
    </recommendedName>
</protein>
<keyword id="KW-0325">Glycoprotein</keyword>
<keyword id="KW-0378">Hydrolase</keyword>
<keyword id="KW-0645">Protease</keyword>
<keyword id="KW-0964">Secreted</keyword>
<keyword id="KW-0720">Serine protease</keyword>
<keyword id="KW-0732">Signal</keyword>
<keyword id="KW-0843">Virulence</keyword>
<keyword id="KW-0865">Zymogen</keyword>
<gene>
    <name type="primary">SUB7</name>
</gene>